<name>GYMN_GYMCH</name>
<dbReference type="GO" id="GO:0050832">
    <property type="term" value="P:defense response to fungus"/>
    <property type="evidence" value="ECO:0007669"/>
    <property type="project" value="UniProtKB-KW"/>
</dbReference>
<dbReference type="GO" id="GO:0031640">
    <property type="term" value="P:killing of cells of another organism"/>
    <property type="evidence" value="ECO:0007669"/>
    <property type="project" value="UniProtKB-KW"/>
</dbReference>
<proteinExistence type="evidence at protein level"/>
<sequence>KTCENLADDY</sequence>
<keyword id="KW-0929">Antimicrobial</keyword>
<keyword id="KW-0903">Direct protein sequencing</keyword>
<keyword id="KW-0295">Fungicide</keyword>
<evidence type="ECO:0000269" key="1">
    <source>
    </source>
</evidence>
<evidence type="ECO:0000303" key="2">
    <source>
    </source>
</evidence>
<evidence type="ECO:0000305" key="3"/>
<accession>P84200</accession>
<comment type="function">
    <text evidence="1">Exerts antifungal activity against F.oxysporum and M.arachidicola, with an IC(50) of 2 uM for the former fungus and 10 uM, respectively. Has weak mitogenic activity against murine splenocytes. Displays antiproliferative activity on a human hepatoma cell line and mouse leukemia cell lines. Inhibits human immunodeficiency virus-1 (HIV-1) reverse transcriptase.</text>
</comment>
<protein>
    <recommendedName>
        <fullName>Gymnin</fullName>
    </recommendedName>
</protein>
<reference evidence="3" key="1">
    <citation type="journal article" date="2003" name="Peptides">
        <title>Gymnin, a potent defensin-like antifungal peptide from the Yunnan bean (Gymnocladus chinensis Baill).</title>
        <authorList>
            <person name="Wong J.H."/>
            <person name="Ng T.B."/>
        </authorList>
    </citation>
    <scope>PROTEIN SEQUENCE</scope>
    <scope>FUNCTION</scope>
    <source>
        <tissue evidence="1">Seed</tissue>
    </source>
</reference>
<organism>
    <name type="scientific">Gymnocladus chinensis</name>
    <name type="common">Soap tree</name>
    <name type="synonym">Yunnan bean</name>
    <dbReference type="NCBI Taxonomy" id="66097"/>
    <lineage>
        <taxon>Eukaryota</taxon>
        <taxon>Viridiplantae</taxon>
        <taxon>Streptophyta</taxon>
        <taxon>Embryophyta</taxon>
        <taxon>Tracheophyta</taxon>
        <taxon>Spermatophyta</taxon>
        <taxon>Magnoliopsida</taxon>
        <taxon>eudicotyledons</taxon>
        <taxon>Gunneridae</taxon>
        <taxon>Pentapetalae</taxon>
        <taxon>rosids</taxon>
        <taxon>fabids</taxon>
        <taxon>Fabales</taxon>
        <taxon>Fabaceae</taxon>
        <taxon>Caesalpinioideae</taxon>
        <taxon>Umtiza clade</taxon>
        <taxon>Gymnocladus</taxon>
    </lineage>
</organism>
<feature type="peptide" id="PRO_0000045099" description="Gymnin">
    <location>
        <begin position="1"/>
        <end position="10" status="greater than"/>
    </location>
</feature>
<feature type="non-terminal residue" evidence="2">
    <location>
        <position position="10"/>
    </location>
</feature>